<feature type="chain" id="PRO_0000379926" description="Peptidyl-prolyl cis-trans isomerase NIMA-interacting 4">
    <location>
        <begin position="1"/>
        <end position="128"/>
    </location>
</feature>
<feature type="domain" description="PpiC" evidence="2">
    <location>
        <begin position="32"/>
        <end position="126"/>
    </location>
</feature>
<feature type="region of interest" description="Disordered" evidence="3">
    <location>
        <begin position="1"/>
        <end position="34"/>
    </location>
</feature>
<comment type="function">
    <text evidence="1">May be involved as a ribosomal RNA processing factor in ribosome biogenesis. Binds to DNA (By similarity).</text>
</comment>
<comment type="catalytic activity">
    <reaction>
        <text>[protein]-peptidylproline (omega=180) = [protein]-peptidylproline (omega=0)</text>
        <dbReference type="Rhea" id="RHEA:16237"/>
        <dbReference type="Rhea" id="RHEA-COMP:10747"/>
        <dbReference type="Rhea" id="RHEA-COMP:10748"/>
        <dbReference type="ChEBI" id="CHEBI:83833"/>
        <dbReference type="ChEBI" id="CHEBI:83834"/>
        <dbReference type="EC" id="5.2.1.8"/>
    </reaction>
</comment>
<comment type="subcellular location">
    <subcellularLocation>
        <location evidence="1">Nucleus</location>
        <location evidence="1">Nucleolus</location>
    </subcellularLocation>
    <subcellularLocation>
        <location evidence="1">Cytoplasm</location>
        <location evidence="1">Cytoskeleton</location>
        <location evidence="1">Spindle</location>
    </subcellularLocation>
    <subcellularLocation>
        <location evidence="1">Cytoplasm</location>
    </subcellularLocation>
</comment>
<comment type="similarity">
    <text evidence="4">Belongs to the PpiC/parvulin rotamase family. PIN4 subfamily.</text>
</comment>
<sequence length="128" mass="13664">MPPKGKGGKGAKGAAASGSGDSDKKEKAQKGGTAVKVRHILCEKHGKCMEAMEKIKSGMRFSEVAAQYSEDKARQGGDLGWMTRGSMVGPFQDAAFALPISTMDKPVYTDPPVKTKFGYHIIMVEGKK</sequence>
<protein>
    <recommendedName>
        <fullName>Peptidyl-prolyl cis-trans isomerase NIMA-interacting 4</fullName>
        <ecNumber>5.2.1.8</ecNumber>
    </recommendedName>
    <alternativeName>
        <fullName>Parvulin-14</fullName>
        <shortName>Par14</shortName>
    </alternativeName>
    <alternativeName>
        <fullName>Peptidyl-prolyl cis-trans isomerase Pin4</fullName>
        <shortName>PPIase Pin4</shortName>
    </alternativeName>
    <alternativeName>
        <fullName>Rotamase Pin4</fullName>
    </alternativeName>
</protein>
<evidence type="ECO:0000250" key="1"/>
<evidence type="ECO:0000255" key="2">
    <source>
        <dbReference type="PROSITE-ProRule" id="PRU00278"/>
    </source>
</evidence>
<evidence type="ECO:0000256" key="3">
    <source>
        <dbReference type="SAM" id="MobiDB-lite"/>
    </source>
</evidence>
<evidence type="ECO:0000305" key="4"/>
<organism>
    <name type="scientific">Danio rerio</name>
    <name type="common">Zebrafish</name>
    <name type="synonym">Brachydanio rerio</name>
    <dbReference type="NCBI Taxonomy" id="7955"/>
    <lineage>
        <taxon>Eukaryota</taxon>
        <taxon>Metazoa</taxon>
        <taxon>Chordata</taxon>
        <taxon>Craniata</taxon>
        <taxon>Vertebrata</taxon>
        <taxon>Euteleostomi</taxon>
        <taxon>Actinopterygii</taxon>
        <taxon>Neopterygii</taxon>
        <taxon>Teleostei</taxon>
        <taxon>Ostariophysi</taxon>
        <taxon>Cypriniformes</taxon>
        <taxon>Danionidae</taxon>
        <taxon>Danioninae</taxon>
        <taxon>Danio</taxon>
    </lineage>
</organism>
<dbReference type="EC" id="5.2.1.8"/>
<dbReference type="EMBL" id="BC095126">
    <property type="protein sequence ID" value="AAH95126.1"/>
    <property type="molecule type" value="mRNA"/>
</dbReference>
<dbReference type="RefSeq" id="NP_001018389.1">
    <property type="nucleotide sequence ID" value="NM_001020553.1"/>
</dbReference>
<dbReference type="SMR" id="Q503Y7"/>
<dbReference type="FunCoup" id="Q503Y7">
    <property type="interactions" value="1137"/>
</dbReference>
<dbReference type="STRING" id="7955.ENSDARP00000023444"/>
<dbReference type="PaxDb" id="7955-ENSDARP00000023444"/>
<dbReference type="Ensembl" id="ENSDART00000026846">
    <property type="protein sequence ID" value="ENSDARP00000023444"/>
    <property type="gene ID" value="ENSDARG00000004527"/>
</dbReference>
<dbReference type="GeneID" id="553574"/>
<dbReference type="KEGG" id="dre:553574"/>
<dbReference type="AGR" id="ZFIN:ZDB-GENE-050522-117"/>
<dbReference type="CTD" id="5303"/>
<dbReference type="ZFIN" id="ZDB-GENE-050522-117">
    <property type="gene designation" value="pin4"/>
</dbReference>
<dbReference type="eggNOG" id="KOG3258">
    <property type="taxonomic scope" value="Eukaryota"/>
</dbReference>
<dbReference type="HOGENOM" id="CLU_090028_2_1_1"/>
<dbReference type="InParanoid" id="Q503Y7"/>
<dbReference type="OMA" id="NAINVRH"/>
<dbReference type="OrthoDB" id="1911748at2759"/>
<dbReference type="PhylomeDB" id="Q503Y7"/>
<dbReference type="TreeFam" id="TF101102"/>
<dbReference type="PRO" id="PR:Q503Y7"/>
<dbReference type="Proteomes" id="UP000000437">
    <property type="component" value="Chromosome 14"/>
</dbReference>
<dbReference type="Bgee" id="ENSDARG00000004527">
    <property type="expression patterns" value="Expressed in tail and 24 other cell types or tissues"/>
</dbReference>
<dbReference type="ExpressionAtlas" id="Q503Y7">
    <property type="expression patterns" value="baseline and differential"/>
</dbReference>
<dbReference type="GO" id="GO:0005737">
    <property type="term" value="C:cytoplasm"/>
    <property type="evidence" value="ECO:0007669"/>
    <property type="project" value="UniProtKB-SubCell"/>
</dbReference>
<dbReference type="GO" id="GO:0005730">
    <property type="term" value="C:nucleolus"/>
    <property type="evidence" value="ECO:0007669"/>
    <property type="project" value="UniProtKB-SubCell"/>
</dbReference>
<dbReference type="GO" id="GO:0005634">
    <property type="term" value="C:nucleus"/>
    <property type="evidence" value="ECO:0000318"/>
    <property type="project" value="GO_Central"/>
</dbReference>
<dbReference type="GO" id="GO:0005819">
    <property type="term" value="C:spindle"/>
    <property type="evidence" value="ECO:0007669"/>
    <property type="project" value="UniProtKB-SubCell"/>
</dbReference>
<dbReference type="GO" id="GO:0003677">
    <property type="term" value="F:DNA binding"/>
    <property type="evidence" value="ECO:0007669"/>
    <property type="project" value="UniProtKB-KW"/>
</dbReference>
<dbReference type="GO" id="GO:0003755">
    <property type="term" value="F:peptidyl-prolyl cis-trans isomerase activity"/>
    <property type="evidence" value="ECO:0007669"/>
    <property type="project" value="UniProtKB-KW"/>
</dbReference>
<dbReference type="GO" id="GO:0006364">
    <property type="term" value="P:rRNA processing"/>
    <property type="evidence" value="ECO:0007669"/>
    <property type="project" value="InterPro"/>
</dbReference>
<dbReference type="FunFam" id="3.10.50.40:FF:000015">
    <property type="entry name" value="Peptidyl-prolyl cis-trans isomerase"/>
    <property type="match status" value="1"/>
</dbReference>
<dbReference type="Gene3D" id="3.10.50.40">
    <property type="match status" value="1"/>
</dbReference>
<dbReference type="InterPro" id="IPR043323">
    <property type="entry name" value="PIN4"/>
</dbReference>
<dbReference type="InterPro" id="IPR046357">
    <property type="entry name" value="PPIase_dom_sf"/>
</dbReference>
<dbReference type="InterPro" id="IPR000297">
    <property type="entry name" value="PPIase_PpiC"/>
</dbReference>
<dbReference type="PANTHER" id="PTHR45995">
    <property type="match status" value="1"/>
</dbReference>
<dbReference type="Pfam" id="PF13616">
    <property type="entry name" value="Rotamase_3"/>
    <property type="match status" value="1"/>
</dbReference>
<dbReference type="SUPFAM" id="SSF54534">
    <property type="entry name" value="FKBP-like"/>
    <property type="match status" value="1"/>
</dbReference>
<dbReference type="PROSITE" id="PS50198">
    <property type="entry name" value="PPIC_PPIASE_2"/>
    <property type="match status" value="1"/>
</dbReference>
<keyword id="KW-0963">Cytoplasm</keyword>
<keyword id="KW-0206">Cytoskeleton</keyword>
<keyword id="KW-0238">DNA-binding</keyword>
<keyword id="KW-0413">Isomerase</keyword>
<keyword id="KW-0539">Nucleus</keyword>
<keyword id="KW-1185">Reference proteome</keyword>
<keyword id="KW-0697">Rotamase</keyword>
<reference key="1">
    <citation type="submission" date="2005-05" db="EMBL/GenBank/DDBJ databases">
        <authorList>
            <consortium name="NIH - Zebrafish Gene Collection (ZGC) project"/>
        </authorList>
    </citation>
    <scope>NUCLEOTIDE SEQUENCE [LARGE SCALE MRNA]</scope>
    <source>
        <tissue>Eye</tissue>
    </source>
</reference>
<name>PIN4_DANRE</name>
<proteinExistence type="evidence at transcript level"/>
<accession>Q503Y7</accession>
<gene>
    <name type="primary">pin4</name>
    <name type="ORF">zgc:110008</name>
</gene>